<keyword id="KW-0025">Alternative splicing</keyword>
<keyword id="KW-0175">Coiled coil</keyword>
<keyword id="KW-0597">Phosphoprotein</keyword>
<keyword id="KW-1267">Proteomics identification</keyword>
<keyword id="KW-1185">Reference proteome</keyword>
<keyword id="KW-0677">Repeat</keyword>
<feature type="chain" id="PRO_0000283044" description="EF-hand calcium-binding domain-containing protein 4A">
    <location>
        <begin position="1"/>
        <end position="399"/>
    </location>
</feature>
<feature type="domain" description="EF-hand 1" evidence="9">
    <location>
        <begin position="33"/>
        <end position="61"/>
    </location>
</feature>
<feature type="domain" description="EF-hand 2" evidence="2">
    <location>
        <begin position="67"/>
        <end position="95"/>
    </location>
</feature>
<feature type="region of interest" description="Disordered" evidence="3">
    <location>
        <begin position="1"/>
        <end position="25"/>
    </location>
</feature>
<feature type="region of interest" description="Disordered" evidence="3">
    <location>
        <begin position="216"/>
        <end position="239"/>
    </location>
</feature>
<feature type="coiled-coil region" evidence="1">
    <location>
        <begin position="181"/>
        <end position="358"/>
    </location>
</feature>
<feature type="compositionally biased region" description="Basic and acidic residues" evidence="3">
    <location>
        <begin position="216"/>
        <end position="226"/>
    </location>
</feature>
<feature type="modified residue" description="Phosphoserine" evidence="10">
    <location>
        <position position="3"/>
    </location>
</feature>
<feature type="splice variant" id="VSP_024290" description="In isoform 2." evidence="7">
    <location>
        <begin position="1"/>
        <end position="89"/>
    </location>
</feature>
<feature type="splice variant" id="VSP_024291" description="In isoform 2." evidence="7">
    <original>LGL</original>
    <variation>MPA</variation>
    <location>
        <begin position="90"/>
        <end position="92"/>
    </location>
</feature>
<feature type="splice variant" id="VSP_024292" description="In isoform 2." evidence="7">
    <original>K</original>
    <variation>DSRPPSR</variation>
    <location>
        <position position="153"/>
    </location>
</feature>
<feature type="splice variant" id="VSP_024293" description="In isoform 2." evidence="7">
    <original>LEQQLHAQAAEHLEAQAQNSQLWRAHEALRTQLEGAQEQIRRLESEARGRQEQTQRDVVAVSRNMQKEKVSLLRQLELLRELNTRLRDDRDACEARRAGSSCRKALTTARLPGPTCCCCCCWARPPRRGSGHLPSAR</original>
    <variation>VSTRPLPCPHGRPCTLPLCLSVPGLSGAWGTRSTPGKRGRSSPVSILPPSS</variation>
    <location>
        <begin position="263"/>
        <end position="399"/>
    </location>
</feature>
<feature type="splice variant" id="VSP_039545" description="In isoform 3." evidence="8">
    <original>LEQQLHAQAAEHLEAQAQNSQLWRAHEALRTQLEGAQEQIRRLESEARGRQEQTQRDVVAVSRNMQKEKVSLLRQLELLRELNTRLRDDRDACEARRAGSSCRKALTTARLPGPTCCCCCCWARPPRRGSGHLPSAR</original>
    <variation>RRGRRLQEHAERESQPATATGAAQGAEYTAAG</variation>
    <location>
        <begin position="263"/>
        <end position="399"/>
    </location>
</feature>
<feature type="sequence variant" id="VAR_031479" description="In dbSNP:rs7126805." evidence="5">
    <original>R</original>
    <variation>Q</variation>
    <location>
        <position position="77"/>
    </location>
</feature>
<feature type="sequence variant" id="VAR_031480" description="In dbSNP:rs28558789." evidence="5">
    <original>K</original>
    <variation>E</variation>
    <location>
        <position position="153"/>
    </location>
</feature>
<feature type="sequence variant" id="VAR_031481" description="In dbSNP:rs35567200.">
    <original>G</original>
    <variation>S</variation>
    <location>
        <position position="173"/>
    </location>
</feature>
<feature type="sequence variant" id="VAR_031482" description="In dbSNP:rs4075289." evidence="4 5">
    <original>S</original>
    <variation>I</variation>
    <location>
        <position position="248"/>
    </location>
</feature>
<proteinExistence type="evidence at protein level"/>
<sequence length="399" mass="44956">MASPGKPGADEAQEEEGELEGGSAGPRAAILEQAEELFLLCDKEAKGFITKHDLQGLQSDLPLTPEQLEAVFESLDRAHTGFLTAREFCLGLGMFVGVASAQGANPCRTPEETFESGGLDVQGTAGSLDEEEEEEERFHTVLEQLGVAPVLGKQRAVRTLWARLQRERPELLGSFEDVLIRASACLEEAARERDGLEQALRRRESEHEREVRALYEETEQLREQSRRPPSQNFARGERRSRLELELQSREQDLERAGLRQRELEQQLHAQAAEHLEAQAQNSQLWRAHEALRTQLEGAQEQIRRLESEARGRQEQTQRDVVAVSRNMQKEKVSLLRQLELLRELNTRLRDDRDACEARRAGSSCRKALTTARLPGPTCCCCCCWARPPRRGSGHLPSAR</sequence>
<reference key="1">
    <citation type="journal article" date="2010" name="Nat. Cell Biol.">
        <title>A novel EF-hand protein, CRACR2A, is a cytosolic Ca2+ sensor that stabilizes CRAC channels in T cells.</title>
        <authorList>
            <person name="Srikanth S."/>
            <person name="Jung H.J."/>
            <person name="Kim K.D."/>
            <person name="Souda P."/>
            <person name="Whitelegge J."/>
            <person name="Gwack Y."/>
        </authorList>
    </citation>
    <scope>NUCLEOTIDE SEQUENCE [MRNA]</scope>
    <scope>FUNCTION</scope>
    <source>
        <tissue>T-cell</tissue>
    </source>
</reference>
<reference key="2">
    <citation type="journal article" date="2004" name="Nat. Genet.">
        <title>Complete sequencing and characterization of 21,243 full-length human cDNAs.</title>
        <authorList>
            <person name="Ota T."/>
            <person name="Suzuki Y."/>
            <person name="Nishikawa T."/>
            <person name="Otsuki T."/>
            <person name="Sugiyama T."/>
            <person name="Irie R."/>
            <person name="Wakamatsu A."/>
            <person name="Hayashi K."/>
            <person name="Sato H."/>
            <person name="Nagai K."/>
            <person name="Kimura K."/>
            <person name="Makita H."/>
            <person name="Sekine M."/>
            <person name="Obayashi M."/>
            <person name="Nishi T."/>
            <person name="Shibahara T."/>
            <person name="Tanaka T."/>
            <person name="Ishii S."/>
            <person name="Yamamoto J."/>
            <person name="Saito K."/>
            <person name="Kawai Y."/>
            <person name="Isono Y."/>
            <person name="Nakamura Y."/>
            <person name="Nagahari K."/>
            <person name="Murakami K."/>
            <person name="Yasuda T."/>
            <person name="Iwayanagi T."/>
            <person name="Wagatsuma M."/>
            <person name="Shiratori A."/>
            <person name="Sudo H."/>
            <person name="Hosoiri T."/>
            <person name="Kaku Y."/>
            <person name="Kodaira H."/>
            <person name="Kondo H."/>
            <person name="Sugawara M."/>
            <person name="Takahashi M."/>
            <person name="Kanda K."/>
            <person name="Yokoi T."/>
            <person name="Furuya T."/>
            <person name="Kikkawa E."/>
            <person name="Omura Y."/>
            <person name="Abe K."/>
            <person name="Kamihara K."/>
            <person name="Katsuta N."/>
            <person name="Sato K."/>
            <person name="Tanikawa M."/>
            <person name="Yamazaki M."/>
            <person name="Ninomiya K."/>
            <person name="Ishibashi T."/>
            <person name="Yamashita H."/>
            <person name="Murakawa K."/>
            <person name="Fujimori K."/>
            <person name="Tanai H."/>
            <person name="Kimata M."/>
            <person name="Watanabe M."/>
            <person name="Hiraoka S."/>
            <person name="Chiba Y."/>
            <person name="Ishida S."/>
            <person name="Ono Y."/>
            <person name="Takiguchi S."/>
            <person name="Watanabe S."/>
            <person name="Yosida M."/>
            <person name="Hotuta T."/>
            <person name="Kusano J."/>
            <person name="Kanehori K."/>
            <person name="Takahashi-Fujii A."/>
            <person name="Hara H."/>
            <person name="Tanase T.-O."/>
            <person name="Nomura Y."/>
            <person name="Togiya S."/>
            <person name="Komai F."/>
            <person name="Hara R."/>
            <person name="Takeuchi K."/>
            <person name="Arita M."/>
            <person name="Imose N."/>
            <person name="Musashino K."/>
            <person name="Yuuki H."/>
            <person name="Oshima A."/>
            <person name="Sasaki N."/>
            <person name="Aotsuka S."/>
            <person name="Yoshikawa Y."/>
            <person name="Matsunawa H."/>
            <person name="Ichihara T."/>
            <person name="Shiohata N."/>
            <person name="Sano S."/>
            <person name="Moriya S."/>
            <person name="Momiyama H."/>
            <person name="Satoh N."/>
            <person name="Takami S."/>
            <person name="Terashima Y."/>
            <person name="Suzuki O."/>
            <person name="Nakagawa S."/>
            <person name="Senoh A."/>
            <person name="Mizoguchi H."/>
            <person name="Goto Y."/>
            <person name="Shimizu F."/>
            <person name="Wakebe H."/>
            <person name="Hishigaki H."/>
            <person name="Watanabe T."/>
            <person name="Sugiyama A."/>
            <person name="Takemoto M."/>
            <person name="Kawakami B."/>
            <person name="Yamazaki M."/>
            <person name="Watanabe K."/>
            <person name="Kumagai A."/>
            <person name="Itakura S."/>
            <person name="Fukuzumi Y."/>
            <person name="Fujimori Y."/>
            <person name="Komiyama M."/>
            <person name="Tashiro H."/>
            <person name="Tanigami A."/>
            <person name="Fujiwara T."/>
            <person name="Ono T."/>
            <person name="Yamada K."/>
            <person name="Fujii Y."/>
            <person name="Ozaki K."/>
            <person name="Hirao M."/>
            <person name="Ohmori Y."/>
            <person name="Kawabata A."/>
            <person name="Hikiji T."/>
            <person name="Kobatake N."/>
            <person name="Inagaki H."/>
            <person name="Ikema Y."/>
            <person name="Okamoto S."/>
            <person name="Okitani R."/>
            <person name="Kawakami T."/>
            <person name="Noguchi S."/>
            <person name="Itoh T."/>
            <person name="Shigeta K."/>
            <person name="Senba T."/>
            <person name="Matsumura K."/>
            <person name="Nakajima Y."/>
            <person name="Mizuno T."/>
            <person name="Morinaga M."/>
            <person name="Sasaki M."/>
            <person name="Togashi T."/>
            <person name="Oyama M."/>
            <person name="Hata H."/>
            <person name="Watanabe M."/>
            <person name="Komatsu T."/>
            <person name="Mizushima-Sugano J."/>
            <person name="Satoh T."/>
            <person name="Shirai Y."/>
            <person name="Takahashi Y."/>
            <person name="Nakagawa K."/>
            <person name="Okumura K."/>
            <person name="Nagase T."/>
            <person name="Nomura N."/>
            <person name="Kikuchi H."/>
            <person name="Masuho Y."/>
            <person name="Yamashita R."/>
            <person name="Nakai K."/>
            <person name="Yada T."/>
            <person name="Nakamura Y."/>
            <person name="Ohara O."/>
            <person name="Isogai T."/>
            <person name="Sugano S."/>
        </authorList>
    </citation>
    <scope>NUCLEOTIDE SEQUENCE [LARGE SCALE MRNA] (ISOFORM 2)</scope>
    <scope>VARIANT ILE-248</scope>
    <source>
        <tissue>Placenta</tissue>
    </source>
</reference>
<reference key="3">
    <citation type="journal article" date="2006" name="Nature">
        <title>Human chromosome 11 DNA sequence and analysis including novel gene identification.</title>
        <authorList>
            <person name="Taylor T.D."/>
            <person name="Noguchi H."/>
            <person name="Totoki Y."/>
            <person name="Toyoda A."/>
            <person name="Kuroki Y."/>
            <person name="Dewar K."/>
            <person name="Lloyd C."/>
            <person name="Itoh T."/>
            <person name="Takeda T."/>
            <person name="Kim D.-W."/>
            <person name="She X."/>
            <person name="Barlow K.F."/>
            <person name="Bloom T."/>
            <person name="Bruford E."/>
            <person name="Chang J.L."/>
            <person name="Cuomo C.A."/>
            <person name="Eichler E."/>
            <person name="FitzGerald M.G."/>
            <person name="Jaffe D.B."/>
            <person name="LaButti K."/>
            <person name="Nicol R."/>
            <person name="Park H.-S."/>
            <person name="Seaman C."/>
            <person name="Sougnez C."/>
            <person name="Yang X."/>
            <person name="Zimmer A.R."/>
            <person name="Zody M.C."/>
            <person name="Birren B.W."/>
            <person name="Nusbaum C."/>
            <person name="Fujiyama A."/>
            <person name="Hattori M."/>
            <person name="Rogers J."/>
            <person name="Lander E.S."/>
            <person name="Sakaki Y."/>
        </authorList>
    </citation>
    <scope>NUCLEOTIDE SEQUENCE [LARGE SCALE GENOMIC DNA]</scope>
</reference>
<reference key="4">
    <citation type="journal article" date="2004" name="Genome Res.">
        <title>The status, quality, and expansion of the NIH full-length cDNA project: the Mammalian Gene Collection (MGC).</title>
        <authorList>
            <consortium name="The MGC Project Team"/>
        </authorList>
    </citation>
    <scope>NUCLEOTIDE SEQUENCE [LARGE SCALE MRNA] (ISOFORM 3)</scope>
    <scope>VARIANTS GLN-77; GLU-153 AND ILE-248</scope>
    <source>
        <tissue>Blood</tissue>
        <tissue>Pancreas</tissue>
    </source>
</reference>
<reference key="5">
    <citation type="journal article" date="2013" name="J. Proteome Res.">
        <title>Toward a comprehensive characterization of a human cancer cell phosphoproteome.</title>
        <authorList>
            <person name="Zhou H."/>
            <person name="Di Palma S."/>
            <person name="Preisinger C."/>
            <person name="Peng M."/>
            <person name="Polat A.N."/>
            <person name="Heck A.J."/>
            <person name="Mohammed S."/>
        </authorList>
    </citation>
    <scope>PHOSPHORYLATION [LARGE SCALE ANALYSIS] AT SER-3</scope>
    <scope>IDENTIFICATION BY MASS SPECTROMETRY [LARGE SCALE ANALYSIS]</scope>
    <source>
        <tissue>Erythroleukemia</tissue>
    </source>
</reference>
<protein>
    <recommendedName>
        <fullName>EF-hand calcium-binding domain-containing protein 4A</fullName>
    </recommendedName>
    <alternativeName>
        <fullName>Calcium release-activated calcium channel regulator 2B</fullName>
        <shortName>CRAC channel regulator 2B</shortName>
    </alternativeName>
    <alternativeName>
        <fullName>Calcium release-activated channel regulator 2B</fullName>
    </alternativeName>
</protein>
<evidence type="ECO:0000255" key="1"/>
<evidence type="ECO:0000255" key="2">
    <source>
        <dbReference type="PROSITE-ProRule" id="PRU00448"/>
    </source>
</evidence>
<evidence type="ECO:0000256" key="3">
    <source>
        <dbReference type="SAM" id="MobiDB-lite"/>
    </source>
</evidence>
<evidence type="ECO:0000269" key="4">
    <source>
    </source>
</evidence>
<evidence type="ECO:0000269" key="5">
    <source>
    </source>
</evidence>
<evidence type="ECO:0000269" key="6">
    <source>
    </source>
</evidence>
<evidence type="ECO:0000303" key="7">
    <source>
    </source>
</evidence>
<evidence type="ECO:0000303" key="8">
    <source>
    </source>
</evidence>
<evidence type="ECO:0000305" key="9"/>
<evidence type="ECO:0007744" key="10">
    <source>
    </source>
</evidence>
<gene>
    <name type="primary">CRACR2B</name>
    <name type="synonym">EFCAB4A</name>
</gene>
<comment type="function">
    <text evidence="6">Plays a role in store-operated Ca(2+) entry (SOCE).</text>
</comment>
<comment type="interaction">
    <interactant intactId="EBI-10267893">
        <id>Q8N4Y2</id>
    </interactant>
    <interactant intactId="EBI-954696">
        <id>Q8N8B7</id>
        <label>TCEANC</label>
    </interactant>
    <organismsDiffer>false</organismsDiffer>
    <experiments>3</experiments>
</comment>
<comment type="interaction">
    <interactant intactId="EBI-11982645">
        <id>Q8N4Y2-3</id>
    </interactant>
    <interactant intactId="EBI-11982647">
        <id>Q8N1Q1</id>
        <label>CA13</label>
    </interactant>
    <organismsDiffer>false</organismsDiffer>
    <experiments>3</experiments>
</comment>
<comment type="interaction">
    <interactant intactId="EBI-11982645">
        <id>Q8N4Y2-3</id>
    </interactant>
    <interactant intactId="EBI-465156">
        <id>Q9UBH0</id>
        <label>IL36RN</label>
    </interactant>
    <organismsDiffer>false</organismsDiffer>
    <experiments>3</experiments>
</comment>
<comment type="interaction">
    <interactant intactId="EBI-11982645">
        <id>Q8N4Y2-3</id>
    </interactant>
    <interactant intactId="EBI-739832">
        <id>Q8TBB1</id>
        <label>LNX1</label>
    </interactant>
    <organismsDiffer>false</organismsDiffer>
    <experiments>3</experiments>
</comment>
<comment type="interaction">
    <interactant intactId="EBI-11982645">
        <id>Q8N4Y2-3</id>
    </interactant>
    <interactant intactId="EBI-14086479">
        <id>Q8IVT4</id>
        <label>MGC50722</label>
    </interactant>
    <organismsDiffer>false</organismsDiffer>
    <experiments>3</experiments>
</comment>
<comment type="interaction">
    <interactant intactId="EBI-11982645">
        <id>Q8N4Y2-3</id>
    </interactant>
    <interactant intactId="EBI-603340">
        <id>P49720</id>
        <label>PSMB3</label>
    </interactant>
    <organismsDiffer>false</organismsDiffer>
    <experiments>3</experiments>
</comment>
<comment type="interaction">
    <interactant intactId="EBI-11982645">
        <id>Q8N4Y2-3</id>
    </interactant>
    <interactant intactId="EBI-366017">
        <id>Q13671</id>
        <label>RIN1</label>
    </interactant>
    <organismsDiffer>false</organismsDiffer>
    <experiments>3</experiments>
</comment>
<comment type="interaction">
    <interactant intactId="EBI-11982645">
        <id>Q8N4Y2-3</id>
    </interactant>
    <interactant intactId="EBI-11955057">
        <id>Q8N8B7-2</id>
        <label>TCEANC</label>
    </interactant>
    <organismsDiffer>false</organismsDiffer>
    <experiments>3</experiments>
</comment>
<comment type="interaction">
    <interactant intactId="EBI-11982645">
        <id>Q8N4Y2-3</id>
    </interactant>
    <interactant intactId="EBI-10241197">
        <id>Q3SY00</id>
        <label>TSGA10IP</label>
    </interactant>
    <organismsDiffer>false</organismsDiffer>
    <experiments>3</experiments>
</comment>
<comment type="interaction">
    <interactant intactId="EBI-11982645">
        <id>Q8N4Y2-3</id>
    </interactant>
    <interactant intactId="EBI-10687282">
        <id>Q9NRE2</id>
        <label>TSHZ2</label>
    </interactant>
    <organismsDiffer>false</organismsDiffer>
    <experiments>3</experiments>
</comment>
<comment type="interaction">
    <interactant intactId="EBI-11982645">
        <id>Q8N4Y2-3</id>
    </interactant>
    <interactant intactId="EBI-2932492">
        <id>Q99757</id>
        <label>TXN2</label>
    </interactant>
    <organismsDiffer>false</organismsDiffer>
    <experiments>3</experiments>
</comment>
<comment type="interaction">
    <interactant intactId="EBI-11982645">
        <id>Q8N4Y2-3</id>
    </interactant>
    <interactant intactId="EBI-743272">
        <id>O75604</id>
        <label>USP2</label>
    </interactant>
    <organismsDiffer>false</organismsDiffer>
    <experiments>3</experiments>
</comment>
<comment type="interaction">
    <interactant intactId="EBI-11982645">
        <id>Q8N4Y2-3</id>
    </interactant>
    <interactant intactId="EBI-739899">
        <id>P24278</id>
        <label>ZBTB25</label>
    </interactant>
    <organismsDiffer>false</organismsDiffer>
    <experiments>3</experiments>
</comment>
<comment type="alternative products">
    <event type="alternative splicing"/>
    <isoform>
        <id>Q8N4Y2-1</id>
        <name>1</name>
        <sequence type="displayed"/>
    </isoform>
    <isoform>
        <id>Q8N4Y2-2</id>
        <name>2</name>
        <sequence type="described" ref="VSP_024290 VSP_024291 VSP_024292 VSP_024293"/>
    </isoform>
    <isoform>
        <id>Q8N4Y2-3</id>
        <name>3</name>
        <sequence type="described" ref="VSP_039545"/>
    </isoform>
</comment>
<comment type="similarity">
    <text evidence="9">Belongs to the EFCAB4 family.</text>
</comment>
<dbReference type="EMBL" id="GU952799">
    <property type="protein sequence ID" value="ADD96763.1"/>
    <property type="molecule type" value="mRNA"/>
</dbReference>
<dbReference type="EMBL" id="AK075180">
    <property type="protein sequence ID" value="BAC11455.1"/>
    <property type="molecule type" value="mRNA"/>
</dbReference>
<dbReference type="EMBL" id="AP006621">
    <property type="status" value="NOT_ANNOTATED_CDS"/>
    <property type="molecule type" value="Genomic_DNA"/>
</dbReference>
<dbReference type="EMBL" id="BC033196">
    <property type="protein sequence ID" value="AAH33196.1"/>
    <property type="molecule type" value="mRNA"/>
</dbReference>
<dbReference type="EMBL" id="BC073821">
    <property type="protein sequence ID" value="AAH73821.1"/>
    <property type="molecule type" value="mRNA"/>
</dbReference>
<dbReference type="CCDS" id="CCDS41588.1">
    <molecule id="Q8N4Y2-3"/>
</dbReference>
<dbReference type="CCDS" id="CCDS65995.1">
    <molecule id="Q8N4Y2-1"/>
</dbReference>
<dbReference type="RefSeq" id="NP_001273535.1">
    <molecule id="Q8N4Y2-1"/>
    <property type="nucleotide sequence ID" value="NM_001286606.2"/>
</dbReference>
<dbReference type="RefSeq" id="NP_775855.3">
    <molecule id="Q8N4Y2-3"/>
    <property type="nucleotide sequence ID" value="NM_173584.4"/>
</dbReference>
<dbReference type="RefSeq" id="XP_016873088.1">
    <molecule id="Q8N4Y2-3"/>
    <property type="nucleotide sequence ID" value="XM_017017599.2"/>
</dbReference>
<dbReference type="RefSeq" id="XP_047282779.1">
    <molecule id="Q8N4Y2-1"/>
    <property type="nucleotide sequence ID" value="XM_047426823.1"/>
</dbReference>
<dbReference type="RefSeq" id="XP_047282780.1">
    <molecule id="Q8N4Y2-1"/>
    <property type="nucleotide sequence ID" value="XM_047426824.1"/>
</dbReference>
<dbReference type="RefSeq" id="XP_047282781.1">
    <molecule id="Q8N4Y2-1"/>
    <property type="nucleotide sequence ID" value="XM_047426825.1"/>
</dbReference>
<dbReference type="RefSeq" id="XP_047282782.1">
    <molecule id="Q8N4Y2-3"/>
    <property type="nucleotide sequence ID" value="XM_047426826.1"/>
</dbReference>
<dbReference type="RefSeq" id="XP_054224499.1">
    <molecule id="Q8N4Y2-1"/>
    <property type="nucleotide sequence ID" value="XM_054368524.1"/>
</dbReference>
<dbReference type="RefSeq" id="XP_054224500.1">
    <molecule id="Q8N4Y2-1"/>
    <property type="nucleotide sequence ID" value="XM_054368525.1"/>
</dbReference>
<dbReference type="RefSeq" id="XP_054224501.1">
    <molecule id="Q8N4Y2-1"/>
    <property type="nucleotide sequence ID" value="XM_054368526.1"/>
</dbReference>
<dbReference type="RefSeq" id="XP_054224502.1">
    <molecule id="Q8N4Y2-1"/>
    <property type="nucleotide sequence ID" value="XM_054368527.1"/>
</dbReference>
<dbReference type="RefSeq" id="XP_054224503.1">
    <molecule id="Q8N4Y2-1"/>
    <property type="nucleotide sequence ID" value="XM_054368528.1"/>
</dbReference>
<dbReference type="RefSeq" id="XP_054224505.1">
    <molecule id="Q8N4Y2-3"/>
    <property type="nucleotide sequence ID" value="XM_054368530.1"/>
</dbReference>
<dbReference type="RefSeq" id="XP_054224506.1">
    <molecule id="Q8N4Y2-3"/>
    <property type="nucleotide sequence ID" value="XM_054368531.1"/>
</dbReference>
<dbReference type="RefSeq" id="XP_054224507.1">
    <molecule id="Q8N4Y2-3"/>
    <property type="nucleotide sequence ID" value="XM_054368532.1"/>
</dbReference>
<dbReference type="SMR" id="Q8N4Y2"/>
<dbReference type="BioGRID" id="129503">
    <property type="interactions" value="64"/>
</dbReference>
<dbReference type="FunCoup" id="Q8N4Y2">
    <property type="interactions" value="4"/>
</dbReference>
<dbReference type="IntAct" id="Q8N4Y2">
    <property type="interactions" value="16"/>
</dbReference>
<dbReference type="MINT" id="Q8N4Y2"/>
<dbReference type="STRING" id="9606.ENSP00000435299"/>
<dbReference type="GlyGen" id="Q8N4Y2">
    <property type="glycosylation" value="1 site"/>
</dbReference>
<dbReference type="iPTMnet" id="Q8N4Y2"/>
<dbReference type="PhosphoSitePlus" id="Q8N4Y2"/>
<dbReference type="BioMuta" id="CRACR2B"/>
<dbReference type="DMDM" id="300669695"/>
<dbReference type="jPOST" id="Q8N4Y2"/>
<dbReference type="MassIVE" id="Q8N4Y2"/>
<dbReference type="PaxDb" id="9606-ENSP00000435299"/>
<dbReference type="PeptideAtlas" id="Q8N4Y2"/>
<dbReference type="ProteomicsDB" id="71990">
    <molecule id="Q8N4Y2-1"/>
</dbReference>
<dbReference type="ProteomicsDB" id="71991">
    <molecule id="Q8N4Y2-2"/>
</dbReference>
<dbReference type="ProteomicsDB" id="71992">
    <molecule id="Q8N4Y2-3"/>
</dbReference>
<dbReference type="Antibodypedia" id="42026">
    <property type="antibodies" value="50 antibodies from 21 providers"/>
</dbReference>
<dbReference type="DNASU" id="283229"/>
<dbReference type="Ensembl" id="ENST00000450448.5">
    <molecule id="Q8N4Y2-3"/>
    <property type="protein sequence ID" value="ENSP00000409256.1"/>
    <property type="gene ID" value="ENSG00000177685.17"/>
</dbReference>
<dbReference type="Ensembl" id="ENST00000525077.2">
    <molecule id="Q8N4Y2-1"/>
    <property type="protein sequence ID" value="ENSP00000435299.1"/>
    <property type="gene ID" value="ENSG00000177685.17"/>
</dbReference>
<dbReference type="Ensembl" id="ENST00000528542.6">
    <molecule id="Q8N4Y2-3"/>
    <property type="protein sequence ID" value="ENSP00000432334.1"/>
    <property type="gene ID" value="ENSG00000177685.17"/>
</dbReference>
<dbReference type="GeneID" id="283229"/>
<dbReference type="KEGG" id="hsa:283229"/>
<dbReference type="MANE-Select" id="ENST00000525077.2">
    <property type="protein sequence ID" value="ENSP00000435299.1"/>
    <property type="RefSeq nucleotide sequence ID" value="NM_001286606.2"/>
    <property type="RefSeq protein sequence ID" value="NP_001273535.1"/>
</dbReference>
<dbReference type="UCSC" id="uc001lrv.3">
    <molecule id="Q8N4Y2-1"/>
    <property type="organism name" value="human"/>
</dbReference>
<dbReference type="AGR" id="HGNC:28703"/>
<dbReference type="CTD" id="283229"/>
<dbReference type="DisGeNET" id="283229"/>
<dbReference type="GeneCards" id="CRACR2B"/>
<dbReference type="HGNC" id="HGNC:28703">
    <property type="gene designation" value="CRACR2B"/>
</dbReference>
<dbReference type="HPA" id="ENSG00000177685">
    <property type="expression patterns" value="Tissue enhanced (pancreas, salivary gland)"/>
</dbReference>
<dbReference type="MIM" id="614177">
    <property type="type" value="gene"/>
</dbReference>
<dbReference type="neXtProt" id="NX_Q8N4Y2"/>
<dbReference type="OpenTargets" id="ENSG00000177685"/>
<dbReference type="PharmGKB" id="PA144596437"/>
<dbReference type="VEuPathDB" id="HostDB:ENSG00000177685"/>
<dbReference type="eggNOG" id="ENOG502QRXK">
    <property type="taxonomic scope" value="Eukaryota"/>
</dbReference>
<dbReference type="GeneTree" id="ENSGT00440000033504"/>
<dbReference type="HOGENOM" id="CLU_047014_0_0_1"/>
<dbReference type="InParanoid" id="Q8N4Y2"/>
<dbReference type="OMA" id="CCHHLGT"/>
<dbReference type="OrthoDB" id="9837699at2759"/>
<dbReference type="PAN-GO" id="Q8N4Y2">
    <property type="GO annotations" value="2 GO annotations based on evolutionary models"/>
</dbReference>
<dbReference type="PhylomeDB" id="Q8N4Y2"/>
<dbReference type="TreeFam" id="TF329556"/>
<dbReference type="PathwayCommons" id="Q8N4Y2"/>
<dbReference type="SignaLink" id="Q8N4Y2"/>
<dbReference type="BioGRID-ORCS" id="283229">
    <property type="hits" value="16 hits in 1153 CRISPR screens"/>
</dbReference>
<dbReference type="ChiTaRS" id="CRACR2B">
    <property type="organism name" value="human"/>
</dbReference>
<dbReference type="GenomeRNAi" id="283229"/>
<dbReference type="Pharos" id="Q8N4Y2">
    <property type="development level" value="Tbio"/>
</dbReference>
<dbReference type="PRO" id="PR:Q8N4Y2"/>
<dbReference type="Proteomes" id="UP000005640">
    <property type="component" value="Chromosome 11"/>
</dbReference>
<dbReference type="RNAct" id="Q8N4Y2">
    <property type="molecule type" value="protein"/>
</dbReference>
<dbReference type="Bgee" id="ENSG00000177685">
    <property type="expression patterns" value="Expressed in body of pancreas and 127 other cell types or tissues"/>
</dbReference>
<dbReference type="ExpressionAtlas" id="Q8N4Y2">
    <property type="expression patterns" value="baseline and differential"/>
</dbReference>
<dbReference type="GO" id="GO:0005509">
    <property type="term" value="F:calcium ion binding"/>
    <property type="evidence" value="ECO:0007669"/>
    <property type="project" value="InterPro"/>
</dbReference>
<dbReference type="GO" id="GO:0002115">
    <property type="term" value="P:store-operated calcium entry"/>
    <property type="evidence" value="ECO:0000315"/>
    <property type="project" value="UniProtKB"/>
</dbReference>
<dbReference type="Gene3D" id="1.10.238.10">
    <property type="entry name" value="EF-hand"/>
    <property type="match status" value="1"/>
</dbReference>
<dbReference type="InterPro" id="IPR051111">
    <property type="entry name" value="Ca-binding_regulatory"/>
</dbReference>
<dbReference type="InterPro" id="IPR011992">
    <property type="entry name" value="EF-hand-dom_pair"/>
</dbReference>
<dbReference type="InterPro" id="IPR002048">
    <property type="entry name" value="EF_hand_dom"/>
</dbReference>
<dbReference type="PANTHER" id="PTHR46311:SF3">
    <property type="entry name" value="CALCIUM-BINDING PROTEIN 8"/>
    <property type="match status" value="1"/>
</dbReference>
<dbReference type="PANTHER" id="PTHR46311">
    <property type="entry name" value="CALCIUM-BINDING PROTEIN 8-RELATED"/>
    <property type="match status" value="1"/>
</dbReference>
<dbReference type="SUPFAM" id="SSF47473">
    <property type="entry name" value="EF-hand"/>
    <property type="match status" value="1"/>
</dbReference>
<dbReference type="PROSITE" id="PS50222">
    <property type="entry name" value="EF_HAND_2"/>
    <property type="match status" value="1"/>
</dbReference>
<accession>Q8N4Y2</accession>
<accession>D5LPR2</accession>
<accession>Q8NBW8</accession>
<organism>
    <name type="scientific">Homo sapiens</name>
    <name type="common">Human</name>
    <dbReference type="NCBI Taxonomy" id="9606"/>
    <lineage>
        <taxon>Eukaryota</taxon>
        <taxon>Metazoa</taxon>
        <taxon>Chordata</taxon>
        <taxon>Craniata</taxon>
        <taxon>Vertebrata</taxon>
        <taxon>Euteleostomi</taxon>
        <taxon>Mammalia</taxon>
        <taxon>Eutheria</taxon>
        <taxon>Euarchontoglires</taxon>
        <taxon>Primates</taxon>
        <taxon>Haplorrhini</taxon>
        <taxon>Catarrhini</taxon>
        <taxon>Hominidae</taxon>
        <taxon>Homo</taxon>
    </lineage>
</organism>
<name>EFC4A_HUMAN</name>